<comment type="function">
    <text evidence="1">The central subunit of the protein translocation channel SecYEG. Consists of two halves formed by TMs 1-5 and 6-10. These two domains form a lateral gate at the front which open onto the bilayer between TMs 2 and 7, and are clamped together by SecE at the back. The channel is closed by both a pore ring composed of hydrophobic SecY resides and a short helix (helix 2A) on the extracellular side of the membrane which forms a plug. The plug probably moves laterally to allow the channel to open. The ring and the pore may move independently.</text>
</comment>
<comment type="subunit">
    <text evidence="1">Component of the Sec protein translocase complex. Heterotrimer consisting of SecY, SecE and SecG subunits. The heterotrimers can form oligomers, although 1 heterotrimer is thought to be able to translocate proteins. Interacts with the ribosome. Interacts with SecDF, and other proteins may be involved. Interacts with SecA.</text>
</comment>
<comment type="subcellular location">
    <subcellularLocation>
        <location evidence="1">Cell membrane</location>
        <topology evidence="1">Multi-pass membrane protein</topology>
    </subcellularLocation>
</comment>
<comment type="miscellaneous">
    <text>Was identified as a high-confidence drug target.</text>
</comment>
<comment type="similarity">
    <text evidence="1">Belongs to the SecY/SEC61-alpha family.</text>
</comment>
<feature type="chain" id="PRO_0000131732" description="Protein translocase subunit SecY">
    <location>
        <begin position="1"/>
        <end position="441"/>
    </location>
</feature>
<feature type="transmembrane region" description="Helical" evidence="1">
    <location>
        <begin position="18"/>
        <end position="38"/>
    </location>
</feature>
<feature type="transmembrane region" description="Helical" evidence="1">
    <location>
        <begin position="78"/>
        <end position="98"/>
    </location>
</feature>
<feature type="transmembrane region" description="Helical" evidence="1">
    <location>
        <begin position="124"/>
        <end position="144"/>
    </location>
</feature>
<feature type="transmembrane region" description="Helical" evidence="1">
    <location>
        <begin position="157"/>
        <end position="177"/>
    </location>
</feature>
<feature type="transmembrane region" description="Helical" evidence="1">
    <location>
        <begin position="180"/>
        <end position="200"/>
    </location>
</feature>
<feature type="transmembrane region" description="Helical" evidence="1">
    <location>
        <begin position="215"/>
        <end position="235"/>
    </location>
</feature>
<feature type="transmembrane region" description="Helical" evidence="1">
    <location>
        <begin position="272"/>
        <end position="292"/>
    </location>
</feature>
<feature type="transmembrane region" description="Helical" evidence="1">
    <location>
        <begin position="318"/>
        <end position="338"/>
    </location>
</feature>
<feature type="transmembrane region" description="Helical" evidence="1">
    <location>
        <begin position="382"/>
        <end position="402"/>
    </location>
</feature>
<feature type="transmembrane region" description="Helical" evidence="1">
    <location>
        <begin position="403"/>
        <end position="423"/>
    </location>
</feature>
<evidence type="ECO:0000255" key="1">
    <source>
        <dbReference type="HAMAP-Rule" id="MF_01465"/>
    </source>
</evidence>
<accession>P9WGN3</accession>
<accession>L0T7J9</accession>
<accession>P0A5Z2</accession>
<accession>P94926</accession>
<reference key="1">
    <citation type="journal article" date="1998" name="Nature">
        <title>Deciphering the biology of Mycobacterium tuberculosis from the complete genome sequence.</title>
        <authorList>
            <person name="Cole S.T."/>
            <person name="Brosch R."/>
            <person name="Parkhill J."/>
            <person name="Garnier T."/>
            <person name="Churcher C.M."/>
            <person name="Harris D.E."/>
            <person name="Gordon S.V."/>
            <person name="Eiglmeier K."/>
            <person name="Gas S."/>
            <person name="Barry C.E. III"/>
            <person name="Tekaia F."/>
            <person name="Badcock K."/>
            <person name="Basham D."/>
            <person name="Brown D."/>
            <person name="Chillingworth T."/>
            <person name="Connor R."/>
            <person name="Davies R.M."/>
            <person name="Devlin K."/>
            <person name="Feltwell T."/>
            <person name="Gentles S."/>
            <person name="Hamlin N."/>
            <person name="Holroyd S."/>
            <person name="Hornsby T."/>
            <person name="Jagels K."/>
            <person name="Krogh A."/>
            <person name="McLean J."/>
            <person name="Moule S."/>
            <person name="Murphy L.D."/>
            <person name="Oliver S."/>
            <person name="Osborne J."/>
            <person name="Quail M.A."/>
            <person name="Rajandream M.A."/>
            <person name="Rogers J."/>
            <person name="Rutter S."/>
            <person name="Seeger K."/>
            <person name="Skelton S."/>
            <person name="Squares S."/>
            <person name="Squares R."/>
            <person name="Sulston J.E."/>
            <person name="Taylor K."/>
            <person name="Whitehead S."/>
            <person name="Barrell B.G."/>
        </authorList>
    </citation>
    <scope>NUCLEOTIDE SEQUENCE [LARGE SCALE GENOMIC DNA]</scope>
    <source>
        <strain>ATCC 25618 / H37Rv</strain>
    </source>
</reference>
<reference key="2">
    <citation type="journal article" date="2008" name="BMC Syst. Biol.">
        <title>targetTB: a target identification pipeline for Mycobacterium tuberculosis through an interactome, reactome and genome-scale structural analysis.</title>
        <authorList>
            <person name="Raman K."/>
            <person name="Yeturu K."/>
            <person name="Chandra N."/>
        </authorList>
    </citation>
    <scope>IDENTIFICATION AS A DRUG TARGET [LARGE SCALE ANALYSIS]</scope>
</reference>
<reference key="3">
    <citation type="journal article" date="2011" name="Mol. Cell. Proteomics">
        <title>Proteogenomic analysis of Mycobacterium tuberculosis by high resolution mass spectrometry.</title>
        <authorList>
            <person name="Kelkar D.S."/>
            <person name="Kumar D."/>
            <person name="Kumar P."/>
            <person name="Balakrishnan L."/>
            <person name="Muthusamy B."/>
            <person name="Yadav A.K."/>
            <person name="Shrivastava P."/>
            <person name="Marimuthu A."/>
            <person name="Anand S."/>
            <person name="Sundaram H."/>
            <person name="Kingsbury R."/>
            <person name="Harsha H.C."/>
            <person name="Nair B."/>
            <person name="Prasad T.S."/>
            <person name="Chauhan D.S."/>
            <person name="Katoch K."/>
            <person name="Katoch V.M."/>
            <person name="Kumar P."/>
            <person name="Chaerkady R."/>
            <person name="Ramachandran S."/>
            <person name="Dash D."/>
            <person name="Pandey A."/>
        </authorList>
    </citation>
    <scope>IDENTIFICATION BY MASS SPECTROMETRY [LARGE SCALE ANALYSIS]</scope>
    <source>
        <strain>ATCC 25618 / H37Rv</strain>
    </source>
</reference>
<organism>
    <name type="scientific">Mycobacterium tuberculosis (strain ATCC 25618 / H37Rv)</name>
    <dbReference type="NCBI Taxonomy" id="83332"/>
    <lineage>
        <taxon>Bacteria</taxon>
        <taxon>Bacillati</taxon>
        <taxon>Actinomycetota</taxon>
        <taxon>Actinomycetes</taxon>
        <taxon>Mycobacteriales</taxon>
        <taxon>Mycobacteriaceae</taxon>
        <taxon>Mycobacterium</taxon>
        <taxon>Mycobacterium tuberculosis complex</taxon>
    </lineage>
</organism>
<dbReference type="EMBL" id="AL123456">
    <property type="protein sequence ID" value="CCP43477.1"/>
    <property type="molecule type" value="Genomic_DNA"/>
</dbReference>
<dbReference type="PIR" id="G70822">
    <property type="entry name" value="G70822"/>
</dbReference>
<dbReference type="RefSeq" id="NP_215246.1">
    <property type="nucleotide sequence ID" value="NC_000962.3"/>
</dbReference>
<dbReference type="RefSeq" id="WP_003403723.1">
    <property type="nucleotide sequence ID" value="NZ_NVQJ01000007.1"/>
</dbReference>
<dbReference type="SMR" id="P9WGN3"/>
<dbReference type="FunCoup" id="P9WGN3">
    <property type="interactions" value="458"/>
</dbReference>
<dbReference type="STRING" id="83332.Rv0732"/>
<dbReference type="PaxDb" id="83332-Rv0732"/>
<dbReference type="DNASU" id="888559"/>
<dbReference type="GeneID" id="45424697"/>
<dbReference type="GeneID" id="888559"/>
<dbReference type="KEGG" id="mtu:Rv0732"/>
<dbReference type="KEGG" id="mtv:RVBD_0732"/>
<dbReference type="TubercuList" id="Rv0732"/>
<dbReference type="eggNOG" id="COG0201">
    <property type="taxonomic scope" value="Bacteria"/>
</dbReference>
<dbReference type="InParanoid" id="P9WGN3"/>
<dbReference type="OrthoDB" id="9809248at2"/>
<dbReference type="PhylomeDB" id="P9WGN3"/>
<dbReference type="Reactome" id="R-HSA-1222387">
    <property type="pathway name" value="Tolerance of reactive oxygen produced by macrophages"/>
</dbReference>
<dbReference type="Proteomes" id="UP000001584">
    <property type="component" value="Chromosome"/>
</dbReference>
<dbReference type="GO" id="GO:0031522">
    <property type="term" value="C:cell envelope Sec protein transport complex"/>
    <property type="evidence" value="ECO:0000318"/>
    <property type="project" value="GO_Central"/>
</dbReference>
<dbReference type="GO" id="GO:0005576">
    <property type="term" value="C:extracellular region"/>
    <property type="evidence" value="ECO:0007005"/>
    <property type="project" value="MTBBASE"/>
</dbReference>
<dbReference type="GO" id="GO:0005886">
    <property type="term" value="C:plasma membrane"/>
    <property type="evidence" value="ECO:0000318"/>
    <property type="project" value="GO_Central"/>
</dbReference>
<dbReference type="GO" id="GO:0008320">
    <property type="term" value="F:protein transmembrane transporter activity"/>
    <property type="evidence" value="ECO:0000318"/>
    <property type="project" value="GO_Central"/>
</dbReference>
<dbReference type="GO" id="GO:0005048">
    <property type="term" value="F:signal sequence binding"/>
    <property type="evidence" value="ECO:0000318"/>
    <property type="project" value="GO_Central"/>
</dbReference>
<dbReference type="GO" id="GO:0043952">
    <property type="term" value="P:protein transport by the Sec complex"/>
    <property type="evidence" value="ECO:0007669"/>
    <property type="project" value="UniProtKB-UniRule"/>
</dbReference>
<dbReference type="GO" id="GO:0006616">
    <property type="term" value="P:SRP-dependent cotranslational protein targeting to membrane, translocation"/>
    <property type="evidence" value="ECO:0000318"/>
    <property type="project" value="GO_Central"/>
</dbReference>
<dbReference type="FunFam" id="1.10.3370.10:FF:000001">
    <property type="entry name" value="Preprotein translocase subunit SecY"/>
    <property type="match status" value="1"/>
</dbReference>
<dbReference type="Gene3D" id="1.10.3370.10">
    <property type="entry name" value="SecY subunit domain"/>
    <property type="match status" value="1"/>
</dbReference>
<dbReference type="HAMAP" id="MF_01465">
    <property type="entry name" value="SecY"/>
    <property type="match status" value="1"/>
</dbReference>
<dbReference type="InterPro" id="IPR026593">
    <property type="entry name" value="SecY"/>
</dbReference>
<dbReference type="InterPro" id="IPR002208">
    <property type="entry name" value="SecY/SEC61-alpha"/>
</dbReference>
<dbReference type="InterPro" id="IPR030659">
    <property type="entry name" value="SecY_CS"/>
</dbReference>
<dbReference type="InterPro" id="IPR023201">
    <property type="entry name" value="SecY_dom_sf"/>
</dbReference>
<dbReference type="NCBIfam" id="TIGR00967">
    <property type="entry name" value="3a0501s007"/>
    <property type="match status" value="1"/>
</dbReference>
<dbReference type="PANTHER" id="PTHR10906">
    <property type="entry name" value="SECY/SEC61-ALPHA FAMILY MEMBER"/>
    <property type="match status" value="1"/>
</dbReference>
<dbReference type="Pfam" id="PF00344">
    <property type="entry name" value="SecY"/>
    <property type="match status" value="1"/>
</dbReference>
<dbReference type="PIRSF" id="PIRSF004557">
    <property type="entry name" value="SecY"/>
    <property type="match status" value="1"/>
</dbReference>
<dbReference type="PRINTS" id="PR00303">
    <property type="entry name" value="SECYTRNLCASE"/>
</dbReference>
<dbReference type="SUPFAM" id="SSF103491">
    <property type="entry name" value="Preprotein translocase SecY subunit"/>
    <property type="match status" value="1"/>
</dbReference>
<dbReference type="PROSITE" id="PS00755">
    <property type="entry name" value="SECY_1"/>
    <property type="match status" value="1"/>
</dbReference>
<dbReference type="PROSITE" id="PS00756">
    <property type="entry name" value="SECY_2"/>
    <property type="match status" value="1"/>
</dbReference>
<protein>
    <recommendedName>
        <fullName evidence="1">Protein translocase subunit SecY</fullName>
    </recommendedName>
</protein>
<name>SECY_MYCTU</name>
<keyword id="KW-1003">Cell membrane</keyword>
<keyword id="KW-0472">Membrane</keyword>
<keyword id="KW-0653">Protein transport</keyword>
<keyword id="KW-1185">Reference proteome</keyword>
<keyword id="KW-0811">Translocation</keyword>
<keyword id="KW-0812">Transmembrane</keyword>
<keyword id="KW-1133">Transmembrane helix</keyword>
<keyword id="KW-0813">Transport</keyword>
<sequence length="441" mass="47611">MLSAFISSLRTVDLRRKILFTLGIVILYRVGAALPSPGVNFPNVQQCIKEASAGEAGQIYSLINLFSGGALLKLTVFAVGVMPYITASIIVQLLTVVIPRFEELRKEGQAGQSKMTQYTRYLAIALAILQATSIVALAANGGLLQGCSLDIIADQSIFTLVVIVLVMTGGAALVMWMGELITERGIGNGMSLLIFVGIAARIPAEGQSILESRGGVVFTAVCAAALIIIVGVVFVEQGQRRIPVQYAKRMVGRRMYGGTSTYLPLKVNQAGVIPVIFASSLIYIPHLITQLIRSGSGVVGNSWWDKFVGTYLSDPSNLVYIGIYFGLIIFFTYFYVSITFNPDERADEMKKFGGFIPGIRPGRPTADYLRYVLSRITLPGSIYLGVIAVLPNLFLQIGAGGTVQNLPFGGTAVLIMIGVGLDTVKQIESQLMQRNYEGFLK</sequence>
<gene>
    <name evidence="1" type="primary">secY</name>
    <name type="ordered locus">Rv0732</name>
    <name type="ORF">MTV041.06</name>
</gene>
<proteinExistence type="evidence at protein level"/>